<keyword id="KW-1185">Reference proteome</keyword>
<reference key="1">
    <citation type="journal article" date="1998" name="Science">
        <title>Genome sequence of the nematode C. elegans: a platform for investigating biology.</title>
        <authorList>
            <consortium name="The C. elegans sequencing consortium"/>
        </authorList>
    </citation>
    <scope>NUCLEOTIDE SEQUENCE [LARGE SCALE GENOMIC DNA]</scope>
    <source>
        <strain>Bristol N2</strain>
    </source>
</reference>
<protein>
    <recommendedName>
        <fullName>Histidine triad nucleotide-binding protein 1</fullName>
    </recommendedName>
</protein>
<sequence length="130" mass="14243">MSEVDKAHLAAINKDVQANDTLFGKIIRKEIPAKIIFEDDEALAFHDVSPQAPIHFLVIPKRRIDMLENAVDSDAALIGKLMVTASKVAKQLGMANGYRVVVNNGKDGAQSVFHLHLHVLGGRQLQWPPG</sequence>
<organism>
    <name type="scientific">Caenorhabditis elegans</name>
    <dbReference type="NCBI Taxonomy" id="6239"/>
    <lineage>
        <taxon>Eukaryota</taxon>
        <taxon>Metazoa</taxon>
        <taxon>Ecdysozoa</taxon>
        <taxon>Nematoda</taxon>
        <taxon>Chromadorea</taxon>
        <taxon>Rhabditida</taxon>
        <taxon>Rhabditina</taxon>
        <taxon>Rhabditomorpha</taxon>
        <taxon>Rhabditoidea</taxon>
        <taxon>Rhabditidae</taxon>
        <taxon>Peloderinae</taxon>
        <taxon>Caenorhabditis</taxon>
    </lineage>
</organism>
<dbReference type="EMBL" id="Z71261">
    <property type="protein sequence ID" value="CAA95802.1"/>
    <property type="molecule type" value="Genomic_DNA"/>
</dbReference>
<dbReference type="PIR" id="T21189">
    <property type="entry name" value="T21189"/>
</dbReference>
<dbReference type="RefSeq" id="NP_492056.1">
    <property type="nucleotide sequence ID" value="NM_059655.7"/>
</dbReference>
<dbReference type="SMR" id="P53795"/>
<dbReference type="BioGRID" id="49547">
    <property type="interactions" value="7"/>
</dbReference>
<dbReference type="FunCoup" id="P53795">
    <property type="interactions" value="1398"/>
</dbReference>
<dbReference type="STRING" id="6239.F21C3.3.2"/>
<dbReference type="PaxDb" id="6239-F21C3.3"/>
<dbReference type="PeptideAtlas" id="P53795"/>
<dbReference type="EnsemblMetazoa" id="F21C3.3.1">
    <property type="protein sequence ID" value="F21C3.3.1"/>
    <property type="gene ID" value="WBGene00009002"/>
</dbReference>
<dbReference type="EnsemblMetazoa" id="F21C3.3.2">
    <property type="protein sequence ID" value="F21C3.3.2"/>
    <property type="gene ID" value="WBGene00009002"/>
</dbReference>
<dbReference type="GeneID" id="184760"/>
<dbReference type="KEGG" id="cel:CELE_F21C3.3"/>
<dbReference type="AGR" id="WB:WBGene00009002"/>
<dbReference type="CTD" id="184760"/>
<dbReference type="WormBase" id="F21C3.3">
    <property type="protein sequence ID" value="CE05678"/>
    <property type="gene ID" value="WBGene00009002"/>
    <property type="gene designation" value="hint-1"/>
</dbReference>
<dbReference type="eggNOG" id="KOG3275">
    <property type="taxonomic scope" value="Eukaryota"/>
</dbReference>
<dbReference type="GeneTree" id="ENSGT00940000154451"/>
<dbReference type="HOGENOM" id="CLU_056776_8_1_1"/>
<dbReference type="InParanoid" id="P53795"/>
<dbReference type="OMA" id="NGVEACQ"/>
<dbReference type="OrthoDB" id="672793at2759"/>
<dbReference type="PhylomeDB" id="P53795"/>
<dbReference type="Reactome" id="R-CEL-9824594">
    <property type="pathway name" value="Regulation of MITF-M-dependent genes involved in apoptosis"/>
</dbReference>
<dbReference type="Reactome" id="R-CEL-9825892">
    <property type="pathway name" value="Regulation of MITF-M-dependent genes involved in cell cycle and proliferation"/>
</dbReference>
<dbReference type="Reactome" id="R-CEL-9856649">
    <property type="pathway name" value="Transcriptional and post-translational regulation of MITF-M expression and activity"/>
</dbReference>
<dbReference type="PRO" id="PR:P53795"/>
<dbReference type="Proteomes" id="UP000001940">
    <property type="component" value="Chromosome I"/>
</dbReference>
<dbReference type="Bgee" id="WBGene00009002">
    <property type="expression patterns" value="Expressed in germ line (C elegans) and 4 other cell types or tissues"/>
</dbReference>
<dbReference type="GO" id="GO:0005737">
    <property type="term" value="C:cytoplasm"/>
    <property type="evidence" value="ECO:0000318"/>
    <property type="project" value="GO_Central"/>
</dbReference>
<dbReference type="GO" id="GO:0005634">
    <property type="term" value="C:nucleus"/>
    <property type="evidence" value="ECO:0000318"/>
    <property type="project" value="GO_Central"/>
</dbReference>
<dbReference type="GO" id="GO:0016787">
    <property type="term" value="F:hydrolase activity"/>
    <property type="evidence" value="ECO:0000318"/>
    <property type="project" value="GO_Central"/>
</dbReference>
<dbReference type="GO" id="GO:0009154">
    <property type="term" value="P:purine ribonucleotide catabolic process"/>
    <property type="evidence" value="ECO:0000318"/>
    <property type="project" value="GO_Central"/>
</dbReference>
<dbReference type="CDD" id="cd01276">
    <property type="entry name" value="PKCI_related"/>
    <property type="match status" value="1"/>
</dbReference>
<dbReference type="FunFam" id="3.30.428.10:FF:000005">
    <property type="entry name" value="Histidine triad nucleotide-binding protein 1"/>
    <property type="match status" value="1"/>
</dbReference>
<dbReference type="Gene3D" id="3.30.428.10">
    <property type="entry name" value="HIT-like"/>
    <property type="match status" value="1"/>
</dbReference>
<dbReference type="InterPro" id="IPR019808">
    <property type="entry name" value="Histidine_triad_CS"/>
</dbReference>
<dbReference type="InterPro" id="IPR001310">
    <property type="entry name" value="Histidine_triad_HIT"/>
</dbReference>
<dbReference type="InterPro" id="IPR011146">
    <property type="entry name" value="HIT-like"/>
</dbReference>
<dbReference type="InterPro" id="IPR036265">
    <property type="entry name" value="HIT-like_sf"/>
</dbReference>
<dbReference type="PANTHER" id="PTHR23089">
    <property type="entry name" value="HISTIDINE TRIAD HIT PROTEIN"/>
    <property type="match status" value="1"/>
</dbReference>
<dbReference type="Pfam" id="PF01230">
    <property type="entry name" value="HIT"/>
    <property type="match status" value="1"/>
</dbReference>
<dbReference type="PRINTS" id="PR00332">
    <property type="entry name" value="HISTRIAD"/>
</dbReference>
<dbReference type="SUPFAM" id="SSF54197">
    <property type="entry name" value="HIT-like"/>
    <property type="match status" value="1"/>
</dbReference>
<dbReference type="PROSITE" id="PS00892">
    <property type="entry name" value="HIT_1"/>
    <property type="match status" value="1"/>
</dbReference>
<dbReference type="PROSITE" id="PS51084">
    <property type="entry name" value="HIT_2"/>
    <property type="match status" value="1"/>
</dbReference>
<evidence type="ECO:0000255" key="1">
    <source>
        <dbReference type="PROSITE-ProRule" id="PRU00464"/>
    </source>
</evidence>
<name>HINT_CAEEL</name>
<proteinExistence type="predicted"/>
<gene>
    <name type="primary">hint-1</name>
    <name type="ORF">F21C3.3</name>
</gene>
<accession>P53795</accession>
<feature type="chain" id="PRO_0000109806" description="Histidine triad nucleotide-binding protein 1">
    <location>
        <begin position="1"/>
        <end position="130"/>
    </location>
</feature>
<feature type="domain" description="HIT" evidence="1">
    <location>
        <begin position="22"/>
        <end position="130"/>
    </location>
</feature>
<feature type="short sequence motif" description="Histidine triad motif">
    <location>
        <begin position="114"/>
        <end position="118"/>
    </location>
</feature>